<name>NDK_RICB8</name>
<evidence type="ECO:0000255" key="1">
    <source>
        <dbReference type="HAMAP-Rule" id="MF_00451"/>
    </source>
</evidence>
<accession>A8GUR0</accession>
<keyword id="KW-0067">ATP-binding</keyword>
<keyword id="KW-0963">Cytoplasm</keyword>
<keyword id="KW-0418">Kinase</keyword>
<keyword id="KW-0460">Magnesium</keyword>
<keyword id="KW-0479">Metal-binding</keyword>
<keyword id="KW-0546">Nucleotide metabolism</keyword>
<keyword id="KW-0547">Nucleotide-binding</keyword>
<keyword id="KW-0597">Phosphoprotein</keyword>
<keyword id="KW-0808">Transferase</keyword>
<reference key="1">
    <citation type="submission" date="2007-09" db="EMBL/GenBank/DDBJ databases">
        <title>Complete genome sequencing of Rickettsia bellii.</title>
        <authorList>
            <person name="Madan A."/>
            <person name="Lee H."/>
            <person name="Madan A."/>
            <person name="Yoon J.-G."/>
            <person name="Ryu G.-Y."/>
            <person name="Dasch G."/>
            <person name="Ereemeva M."/>
        </authorList>
    </citation>
    <scope>NUCLEOTIDE SEQUENCE [LARGE SCALE GENOMIC DNA]</scope>
    <source>
        <strain>OSU 85-389</strain>
    </source>
</reference>
<feature type="chain" id="PRO_1000026286" description="Nucleoside diphosphate kinase">
    <location>
        <begin position="1"/>
        <end position="140"/>
    </location>
</feature>
<feature type="active site" description="Pros-phosphohistidine intermediate" evidence="1">
    <location>
        <position position="117"/>
    </location>
</feature>
<feature type="binding site" evidence="1">
    <location>
        <position position="11"/>
    </location>
    <ligand>
        <name>ATP</name>
        <dbReference type="ChEBI" id="CHEBI:30616"/>
    </ligand>
</feature>
<feature type="binding site" evidence="1">
    <location>
        <position position="59"/>
    </location>
    <ligand>
        <name>ATP</name>
        <dbReference type="ChEBI" id="CHEBI:30616"/>
    </ligand>
</feature>
<feature type="binding site" evidence="1">
    <location>
        <position position="87"/>
    </location>
    <ligand>
        <name>ATP</name>
        <dbReference type="ChEBI" id="CHEBI:30616"/>
    </ligand>
</feature>
<feature type="binding site" evidence="1">
    <location>
        <position position="93"/>
    </location>
    <ligand>
        <name>ATP</name>
        <dbReference type="ChEBI" id="CHEBI:30616"/>
    </ligand>
</feature>
<feature type="binding site" evidence="1">
    <location>
        <position position="104"/>
    </location>
    <ligand>
        <name>ATP</name>
        <dbReference type="ChEBI" id="CHEBI:30616"/>
    </ligand>
</feature>
<feature type="binding site" evidence="1">
    <location>
        <position position="114"/>
    </location>
    <ligand>
        <name>ATP</name>
        <dbReference type="ChEBI" id="CHEBI:30616"/>
    </ligand>
</feature>
<comment type="function">
    <text evidence="1">Major role in the synthesis of nucleoside triphosphates other than ATP. The ATP gamma phosphate is transferred to the NDP beta phosphate via a ping-pong mechanism, using a phosphorylated active-site intermediate.</text>
</comment>
<comment type="catalytic activity">
    <reaction evidence="1">
        <text>a 2'-deoxyribonucleoside 5'-diphosphate + ATP = a 2'-deoxyribonucleoside 5'-triphosphate + ADP</text>
        <dbReference type="Rhea" id="RHEA:44640"/>
        <dbReference type="ChEBI" id="CHEBI:30616"/>
        <dbReference type="ChEBI" id="CHEBI:61560"/>
        <dbReference type="ChEBI" id="CHEBI:73316"/>
        <dbReference type="ChEBI" id="CHEBI:456216"/>
        <dbReference type="EC" id="2.7.4.6"/>
    </reaction>
</comment>
<comment type="catalytic activity">
    <reaction evidence="1">
        <text>a ribonucleoside 5'-diphosphate + ATP = a ribonucleoside 5'-triphosphate + ADP</text>
        <dbReference type="Rhea" id="RHEA:18113"/>
        <dbReference type="ChEBI" id="CHEBI:30616"/>
        <dbReference type="ChEBI" id="CHEBI:57930"/>
        <dbReference type="ChEBI" id="CHEBI:61557"/>
        <dbReference type="ChEBI" id="CHEBI:456216"/>
        <dbReference type="EC" id="2.7.4.6"/>
    </reaction>
</comment>
<comment type="cofactor">
    <cofactor evidence="1">
        <name>Mg(2+)</name>
        <dbReference type="ChEBI" id="CHEBI:18420"/>
    </cofactor>
</comment>
<comment type="subunit">
    <text evidence="1">Homotetramer.</text>
</comment>
<comment type="subcellular location">
    <subcellularLocation>
        <location evidence="1">Cytoplasm</location>
    </subcellularLocation>
</comment>
<comment type="similarity">
    <text evidence="1">Belongs to the NDK family.</text>
</comment>
<organism>
    <name type="scientific">Rickettsia bellii (strain OSU 85-389)</name>
    <dbReference type="NCBI Taxonomy" id="391896"/>
    <lineage>
        <taxon>Bacteria</taxon>
        <taxon>Pseudomonadati</taxon>
        <taxon>Pseudomonadota</taxon>
        <taxon>Alphaproteobacteria</taxon>
        <taxon>Rickettsiales</taxon>
        <taxon>Rickettsiaceae</taxon>
        <taxon>Rickettsieae</taxon>
        <taxon>Rickettsia</taxon>
        <taxon>belli group</taxon>
    </lineage>
</organism>
<protein>
    <recommendedName>
        <fullName evidence="1">Nucleoside diphosphate kinase</fullName>
        <shortName evidence="1">NDK</shortName>
        <shortName evidence="1">NDP kinase</shortName>
        <ecNumber evidence="1">2.7.4.6</ecNumber>
    </recommendedName>
    <alternativeName>
        <fullName evidence="1">Nucleoside-2-P kinase</fullName>
    </alternativeName>
</protein>
<sequence>MTIQYTFSMIKPDAIKRNKIGQVNTYLENEGLKIVAQKMTTLTKYEAECFYDEHRARPFFDSLVEYITSGPVVLQVLKGMDAITLNRKVMGATNPAEAEAGTIRKDIGESIEANSIHGSDSENSAKREIKFFFKKSEIIE</sequence>
<dbReference type="EC" id="2.7.4.6" evidence="1"/>
<dbReference type="EMBL" id="CP000849">
    <property type="protein sequence ID" value="ABV78557.1"/>
    <property type="molecule type" value="Genomic_DNA"/>
</dbReference>
<dbReference type="RefSeq" id="WP_011478003.1">
    <property type="nucleotide sequence ID" value="NC_009883.1"/>
</dbReference>
<dbReference type="SMR" id="A8GUR0"/>
<dbReference type="KEGG" id="rbo:A1I_00785"/>
<dbReference type="HOGENOM" id="CLU_060216_8_1_5"/>
<dbReference type="GO" id="GO:0005737">
    <property type="term" value="C:cytoplasm"/>
    <property type="evidence" value="ECO:0007669"/>
    <property type="project" value="UniProtKB-SubCell"/>
</dbReference>
<dbReference type="GO" id="GO:0005524">
    <property type="term" value="F:ATP binding"/>
    <property type="evidence" value="ECO:0007669"/>
    <property type="project" value="UniProtKB-UniRule"/>
</dbReference>
<dbReference type="GO" id="GO:0046872">
    <property type="term" value="F:metal ion binding"/>
    <property type="evidence" value="ECO:0007669"/>
    <property type="project" value="UniProtKB-KW"/>
</dbReference>
<dbReference type="GO" id="GO:0004550">
    <property type="term" value="F:nucleoside diphosphate kinase activity"/>
    <property type="evidence" value="ECO:0007669"/>
    <property type="project" value="UniProtKB-UniRule"/>
</dbReference>
<dbReference type="GO" id="GO:0006241">
    <property type="term" value="P:CTP biosynthetic process"/>
    <property type="evidence" value="ECO:0007669"/>
    <property type="project" value="UniProtKB-UniRule"/>
</dbReference>
<dbReference type="GO" id="GO:0006183">
    <property type="term" value="P:GTP biosynthetic process"/>
    <property type="evidence" value="ECO:0007669"/>
    <property type="project" value="UniProtKB-UniRule"/>
</dbReference>
<dbReference type="GO" id="GO:0006228">
    <property type="term" value="P:UTP biosynthetic process"/>
    <property type="evidence" value="ECO:0007669"/>
    <property type="project" value="UniProtKB-UniRule"/>
</dbReference>
<dbReference type="CDD" id="cd04413">
    <property type="entry name" value="NDPk_I"/>
    <property type="match status" value="1"/>
</dbReference>
<dbReference type="FunFam" id="3.30.70.141:FF:000003">
    <property type="entry name" value="Nucleoside diphosphate kinase"/>
    <property type="match status" value="1"/>
</dbReference>
<dbReference type="Gene3D" id="3.30.70.141">
    <property type="entry name" value="Nucleoside diphosphate kinase-like domain"/>
    <property type="match status" value="1"/>
</dbReference>
<dbReference type="HAMAP" id="MF_00451">
    <property type="entry name" value="NDP_kinase"/>
    <property type="match status" value="1"/>
</dbReference>
<dbReference type="InterPro" id="IPR034907">
    <property type="entry name" value="NDK-like_dom"/>
</dbReference>
<dbReference type="InterPro" id="IPR036850">
    <property type="entry name" value="NDK-like_dom_sf"/>
</dbReference>
<dbReference type="InterPro" id="IPR001564">
    <property type="entry name" value="Nucleoside_diP_kinase"/>
</dbReference>
<dbReference type="InterPro" id="IPR023005">
    <property type="entry name" value="Nucleoside_diP_kinase_AS"/>
</dbReference>
<dbReference type="NCBIfam" id="NF001908">
    <property type="entry name" value="PRK00668.1"/>
    <property type="match status" value="1"/>
</dbReference>
<dbReference type="PANTHER" id="PTHR46161">
    <property type="entry name" value="NUCLEOSIDE DIPHOSPHATE KINASE"/>
    <property type="match status" value="1"/>
</dbReference>
<dbReference type="PANTHER" id="PTHR46161:SF3">
    <property type="entry name" value="NUCLEOSIDE DIPHOSPHATE KINASE DDB_G0292928-RELATED"/>
    <property type="match status" value="1"/>
</dbReference>
<dbReference type="Pfam" id="PF00334">
    <property type="entry name" value="NDK"/>
    <property type="match status" value="1"/>
</dbReference>
<dbReference type="PRINTS" id="PR01243">
    <property type="entry name" value="NUCDPKINASE"/>
</dbReference>
<dbReference type="SMART" id="SM00562">
    <property type="entry name" value="NDK"/>
    <property type="match status" value="1"/>
</dbReference>
<dbReference type="SUPFAM" id="SSF54919">
    <property type="entry name" value="Nucleoside diphosphate kinase, NDK"/>
    <property type="match status" value="1"/>
</dbReference>
<dbReference type="PROSITE" id="PS00469">
    <property type="entry name" value="NDPK"/>
    <property type="match status" value="1"/>
</dbReference>
<dbReference type="PROSITE" id="PS51374">
    <property type="entry name" value="NDPK_LIKE"/>
    <property type="match status" value="1"/>
</dbReference>
<gene>
    <name evidence="1" type="primary">ndk</name>
    <name type="ordered locus">A1I_00785</name>
</gene>
<proteinExistence type="inferred from homology"/>